<organism>
    <name type="scientific">Human spumaretrovirus</name>
    <name type="common">SFVcpz(hu)</name>
    <name type="synonym">Human foamy virus</name>
    <dbReference type="NCBI Taxonomy" id="11963"/>
    <lineage>
        <taxon>Viruses</taxon>
        <taxon>Riboviria</taxon>
        <taxon>Pararnavirae</taxon>
        <taxon>Artverviricota</taxon>
        <taxon>Revtraviricetes</taxon>
        <taxon>Ortervirales</taxon>
        <taxon>Retroviridae</taxon>
        <taxon>Spumaretrovirinae</taxon>
        <taxon>Spumavirus</taxon>
        <taxon>Simian foamy virus</taxon>
    </lineage>
</organism>
<sequence>MNPLQLLQPLPAEIKGTKLLAHWDSGATITCIPESFLEDEQPIKKTLIKTIHGEKQQNVYYVTFKVKGRKVEAEVIASPYEYILLSPTDVPWLTQQPLQLTILVPLQEYQEKILSKTALPEDQKQQLKTLFVKYDNLWQHWENQVGHRKIRPHNIATGDYPPRPQKQYPINPKAKPSIQIVIDDLLKQGVLTPQNSTMNTPVYPVPKPDGRWRMVLDYREVNKTIPLTAAQNQHSAGILATIVRQKYKTTLDLANGFWAHPITPESYWLTAFTWQGKQYCWTRLPQGFLNSPALFTADVVDLLKEIPNVQVYVDDIYLSHDDPKEHVQQLEKVFQILLQAGYVVSLKKSEIGQKTVEFLGFNITKEGRGLTDTFKTKLLNITPPKDLKQLQSILGLLNFARNFIPNFAELVQPLYNLIASAKGKYIEWSEENTKQLNMVIEALNTASNLEERLPEQRLVIKVNTSPSAGYVRYYNETGKKPIMYLNYVFSKAELKFSMLEKLLTTMHKALIKAMDLAMGQEILVYSPIVSMTKIQKTPLPERKALPIRWITWMTYLEDPRIQFHYDKTLPELKHIPDVYTSSQSPVKHPSQYEGVFYTDGSAIKSPDPTKSNNAGMGIVHATYKPEYQVLNQWSIPLGNHTAQMAEIAAVEFACKKALKIPGPVLVITDSFYVAESANKELPYWKSNGFVNNKKKPLKHISKWKSIAECLSMKPDITIQHEKGISLQIPVFILKGNALADKLATQGSYVVNCNTKKPNLDAELDQLLQGHYIKGYPKQYTYFLEDGKVKVSRPEGVKIIPPQSDRQKIVLQAHNLAHTGREATLLKIANLYWWPNMRKDVVKQLGRCQQCLITNASNKASGPILRPDRPQKPFDKFFIDYIGPLPPSQGYLYVLVVVDGMTGFTWLYPTKAPSTSATVKSLNVLTSIAIPKVIHSDQGAAFTSSTFAEWAKERGIHLEFSTPYHPQSGSKVERKNSDIKRLLTKLLVGRPTKWYDLLPVVQLALNNTYSPVLKYTPHQLLFGIDSNTPFANQDTLDLTREEELSLLQEIRTSLYHPSTPPASSRSWSPVVGQLVQERVARPASLRPRWHKPSTVLKVLNPRTVVILDHLGNNRTVSIDNLKPTSHQNGTTNDTATMDHLEKNE</sequence>
<evidence type="ECO:0000250" key="1"/>
<evidence type="ECO:0000255" key="2">
    <source>
        <dbReference type="PROSITE-ProRule" id="PRU00405"/>
    </source>
</evidence>
<evidence type="ECO:0000255" key="3">
    <source>
        <dbReference type="PROSITE-ProRule" id="PRU00408"/>
    </source>
</evidence>
<evidence type="ECO:0000255" key="4">
    <source>
        <dbReference type="PROSITE-ProRule" id="PRU00457"/>
    </source>
</evidence>
<evidence type="ECO:0000255" key="5">
    <source>
        <dbReference type="PROSITE-ProRule" id="PRU00863"/>
    </source>
</evidence>
<evidence type="ECO:0000256" key="6">
    <source>
        <dbReference type="SAM" id="MobiDB-lite"/>
    </source>
</evidence>
<evidence type="ECO:0000269" key="7">
    <source>
    </source>
</evidence>
<evidence type="ECO:0000269" key="8">
    <source>
    </source>
</evidence>
<evidence type="ECO:0000269" key="9">
    <source>
    </source>
</evidence>
<evidence type="ECO:0000305" key="10"/>
<evidence type="ECO:0000305" key="11">
    <source>
    </source>
</evidence>
<evidence type="ECO:0000305" key="12">
    <source>
    </source>
</evidence>
<evidence type="ECO:0007829" key="13">
    <source>
        <dbReference type="PDB" id="2LSN"/>
    </source>
</evidence>
<evidence type="ECO:0007829" key="14">
    <source>
        <dbReference type="PDB" id="2X6N"/>
    </source>
</evidence>
<evidence type="ECO:0007829" key="15">
    <source>
        <dbReference type="PDB" id="2X74"/>
    </source>
</evidence>
<evidence type="ECO:0007829" key="16">
    <source>
        <dbReference type="PDB" id="2X78"/>
    </source>
</evidence>
<evidence type="ECO:0007829" key="17">
    <source>
        <dbReference type="PDB" id="3L2R"/>
    </source>
</evidence>
<evidence type="ECO:0007829" key="18">
    <source>
        <dbReference type="PDB" id="3L2V"/>
    </source>
</evidence>
<evidence type="ECO:0007829" key="19">
    <source>
        <dbReference type="PDB" id="3OYM"/>
    </source>
</evidence>
<evidence type="ECO:0007829" key="20">
    <source>
        <dbReference type="PDB" id="4BE2"/>
    </source>
</evidence>
<accession>P14350</accession>
<accession>O12528</accession>
<accession>O12817</accession>
<accession>Q76U32</accession>
<accession>Q98835</accession>
<feature type="chain" id="PRO_0000125483" description="Pro-Pol polyprotein">
    <location>
        <begin position="1"/>
        <end position="1143"/>
    </location>
</feature>
<feature type="chain" id="PRO_0000245443" description="Protease/Reverse transcriptase/ribonuclease H">
    <location>
        <begin position="1"/>
        <end position="751"/>
    </location>
</feature>
<feature type="chain" id="PRO_0000245444" description="Protease/Reverse transcriptase">
    <location>
        <begin position="1"/>
        <end position="596"/>
    </location>
</feature>
<feature type="chain" id="PRO_0000245445" description="Ribonuclease H">
    <location>
        <begin position="597"/>
        <end position="751"/>
    </location>
</feature>
<feature type="chain" id="PRO_0000245446" description="Integrase">
    <location>
        <begin position="752"/>
        <end position="1143"/>
    </location>
</feature>
<feature type="domain" description="Peptidase A9" evidence="5">
    <location>
        <begin position="1"/>
        <end position="143"/>
    </location>
</feature>
<feature type="domain" description="Reverse transcriptase" evidence="2">
    <location>
        <begin position="198"/>
        <end position="363"/>
    </location>
</feature>
<feature type="domain" description="RNase H type-1" evidence="3">
    <location>
        <begin position="590"/>
        <end position="748"/>
    </location>
</feature>
<feature type="domain" description="Integrase catalytic" evidence="4">
    <location>
        <begin position="868"/>
        <end position="1024"/>
    </location>
</feature>
<feature type="region of interest" description="Disordered" evidence="6">
    <location>
        <begin position="1117"/>
        <end position="1143"/>
    </location>
</feature>
<feature type="compositionally biased region" description="Polar residues" evidence="6">
    <location>
        <begin position="1117"/>
        <end position="1134"/>
    </location>
</feature>
<feature type="active site" description="For protease activity" evidence="12">
    <location>
        <position position="24"/>
    </location>
</feature>
<feature type="binding site" evidence="1">
    <location>
        <position position="252"/>
    </location>
    <ligand>
        <name>Mg(2+)</name>
        <dbReference type="ChEBI" id="CHEBI:18420"/>
        <label>1</label>
        <note>catalytic; for reverse transcriptase activity</note>
    </ligand>
</feature>
<feature type="binding site" evidence="1">
    <location>
        <position position="314"/>
    </location>
    <ligand>
        <name>Mg(2+)</name>
        <dbReference type="ChEBI" id="CHEBI:18420"/>
        <label>1</label>
        <note>catalytic; for reverse transcriptase activity</note>
    </ligand>
</feature>
<feature type="binding site" evidence="1">
    <location>
        <position position="315"/>
    </location>
    <ligand>
        <name>Mg(2+)</name>
        <dbReference type="ChEBI" id="CHEBI:18420"/>
        <label>1</label>
        <note>catalytic; for reverse transcriptase activity</note>
    </ligand>
</feature>
<feature type="binding site" evidence="10">
    <location>
        <position position="599"/>
    </location>
    <ligand>
        <name>Mg(2+)</name>
        <dbReference type="ChEBI" id="CHEBI:18420"/>
        <label>2</label>
        <note>catalytic; for RNase H activity</note>
    </ligand>
</feature>
<feature type="binding site" evidence="1">
    <location>
        <position position="646"/>
    </location>
    <ligand>
        <name>Mg(2+)</name>
        <dbReference type="ChEBI" id="CHEBI:18420"/>
        <label>2</label>
        <note>catalytic; for RNase H activity</note>
    </ligand>
</feature>
<feature type="binding site" evidence="1">
    <location>
        <position position="669"/>
    </location>
    <ligand>
        <name>Mg(2+)</name>
        <dbReference type="ChEBI" id="CHEBI:18420"/>
        <label>2</label>
        <note>catalytic; for RNase H activity</note>
    </ligand>
</feature>
<feature type="binding site" evidence="1">
    <location>
        <position position="740"/>
    </location>
    <ligand>
        <name>Mg(2+)</name>
        <dbReference type="ChEBI" id="CHEBI:18420"/>
        <label>2</label>
        <note>catalytic; for RNase H activity</note>
    </ligand>
</feature>
<feature type="binding site" evidence="1">
    <location>
        <position position="874"/>
    </location>
    <ligand>
        <name>Mg(2+)</name>
        <dbReference type="ChEBI" id="CHEBI:18420"/>
        <label>3</label>
        <note>catalytic; for integrase activity</note>
    </ligand>
</feature>
<feature type="binding site" evidence="1">
    <location>
        <position position="936"/>
    </location>
    <ligand>
        <name>Mg(2+)</name>
        <dbReference type="ChEBI" id="CHEBI:18420"/>
        <label>3</label>
        <note>catalytic; for integrase activity</note>
    </ligand>
</feature>
<feature type="site" description="Cleavage; by viral protease; partial">
    <location>
        <begin position="596"/>
        <end position="597"/>
    </location>
</feature>
<feature type="site" description="Cleavage; by viral protease">
    <location>
        <begin position="751"/>
        <end position="752"/>
    </location>
</feature>
<feature type="mutagenesis site" description="Complete loss of Gag processing and of Pol processing. Particles are non-infectious." evidence="7">
    <original>D</original>
    <variation>A</variation>
    <location>
        <position position="24"/>
    </location>
</feature>
<feature type="mutagenesis site" description="No effect on polyprotein processing and viral replication." evidence="7">
    <original>S</original>
    <variation>T</variation>
    <location>
        <position position="25"/>
    </location>
</feature>
<feature type="mutagenesis site" description="No effect on RT or RNase H activities." evidence="8">
    <original>P</original>
    <variation>G</variation>
    <location>
        <position position="152"/>
    </location>
</feature>
<feature type="mutagenesis site" description="30% loss of RT activity." evidence="8">
    <original>P</original>
    <variation>G</variation>
    <location>
        <position position="169"/>
    </location>
</feature>
<feature type="mutagenesis site" description="40% loss of RT activity." evidence="8">
    <original>P</original>
    <variation>G</variation>
    <location>
        <position position="193"/>
    </location>
</feature>
<feature type="mutagenesis site" description="95% loss of RNase H activity." evidence="8">
    <original>D</original>
    <variation>A</variation>
    <location>
        <position position="599"/>
    </location>
</feature>
<feature type="mutagenesis site" description="50% loss of RNase H activity." evidence="8">
    <original>Y</original>
    <variation>F</variation>
    <location>
        <position position="672"/>
    </location>
</feature>
<feature type="strand" evidence="13">
    <location>
        <begin position="593"/>
        <end position="603"/>
    </location>
</feature>
<feature type="strand" evidence="13">
    <location>
        <begin position="613"/>
        <end position="621"/>
    </location>
</feature>
<feature type="strand" evidence="13">
    <location>
        <begin position="624"/>
        <end position="626"/>
    </location>
</feature>
<feature type="strand" evidence="13">
    <location>
        <begin position="629"/>
        <end position="639"/>
    </location>
</feature>
<feature type="helix" evidence="13">
    <location>
        <begin position="642"/>
        <end position="659"/>
    </location>
</feature>
<feature type="strand" evidence="13">
    <location>
        <begin position="660"/>
        <end position="662"/>
    </location>
</feature>
<feature type="strand" evidence="13">
    <location>
        <begin position="664"/>
        <end position="669"/>
    </location>
</feature>
<feature type="helix" evidence="13">
    <location>
        <begin position="671"/>
        <end position="678"/>
    </location>
</feature>
<feature type="helix" evidence="13">
    <location>
        <begin position="680"/>
        <end position="686"/>
    </location>
</feature>
<feature type="strand" evidence="13">
    <location>
        <begin position="693"/>
        <end position="695"/>
    </location>
</feature>
<feature type="helix" evidence="13">
    <location>
        <begin position="700"/>
        <end position="712"/>
    </location>
</feature>
<feature type="strand" evidence="13">
    <location>
        <begin position="717"/>
        <end position="720"/>
    </location>
</feature>
<feature type="strand" evidence="13">
    <location>
        <begin position="723"/>
        <end position="725"/>
    </location>
</feature>
<feature type="strand" evidence="13">
    <location>
        <begin position="727"/>
        <end position="729"/>
    </location>
</feature>
<feature type="helix" evidence="13">
    <location>
        <begin position="731"/>
        <end position="749"/>
    </location>
</feature>
<feature type="helix" evidence="19">
    <location>
        <begin position="760"/>
        <end position="767"/>
    </location>
</feature>
<feature type="strand" evidence="18">
    <location>
        <begin position="773"/>
        <end position="775"/>
    </location>
</feature>
<feature type="strand" evidence="17">
    <location>
        <begin position="777"/>
        <end position="779"/>
    </location>
</feature>
<feature type="strand" evidence="19">
    <location>
        <begin position="781"/>
        <end position="784"/>
    </location>
</feature>
<feature type="strand" evidence="19">
    <location>
        <begin position="787"/>
        <end position="792"/>
    </location>
</feature>
<feature type="strand" evidence="19">
    <location>
        <begin position="795"/>
        <end position="798"/>
    </location>
</feature>
<feature type="helix" evidence="19">
    <location>
        <begin position="802"/>
        <end position="804"/>
    </location>
</feature>
<feature type="helix" evidence="19">
    <location>
        <begin position="805"/>
        <end position="814"/>
    </location>
</feature>
<feature type="turn" evidence="19">
    <location>
        <begin position="815"/>
        <end position="817"/>
    </location>
</feature>
<feature type="helix" evidence="19">
    <location>
        <begin position="820"/>
        <end position="828"/>
    </location>
</feature>
<feature type="helix" evidence="19">
    <location>
        <begin position="836"/>
        <end position="844"/>
    </location>
</feature>
<feature type="helix" evidence="19">
    <location>
        <begin position="848"/>
        <end position="853"/>
    </location>
</feature>
<feature type="strand" evidence="19">
    <location>
        <begin position="858"/>
        <end position="860"/>
    </location>
</feature>
<feature type="strand" evidence="16">
    <location>
        <begin position="874"/>
        <end position="881"/>
    </location>
</feature>
<feature type="strand" evidence="16">
    <location>
        <begin position="892"/>
        <end position="898"/>
    </location>
</feature>
<feature type="turn" evidence="16">
    <location>
        <begin position="899"/>
        <end position="901"/>
    </location>
</feature>
<feature type="strand" evidence="16">
    <location>
        <begin position="904"/>
        <end position="912"/>
    </location>
</feature>
<feature type="helix" evidence="16">
    <location>
        <begin position="914"/>
        <end position="924"/>
    </location>
</feature>
<feature type="turn" evidence="16">
    <location>
        <begin position="925"/>
        <end position="927"/>
    </location>
</feature>
<feature type="strand" evidence="16">
    <location>
        <begin position="931"/>
        <end position="935"/>
    </location>
</feature>
<feature type="helix" evidence="16">
    <location>
        <begin position="939"/>
        <end position="942"/>
    </location>
</feature>
<feature type="helix" evidence="16">
    <location>
        <begin position="944"/>
        <end position="953"/>
    </location>
</feature>
<feature type="strand" evidence="16">
    <location>
        <begin position="956"/>
        <end position="959"/>
    </location>
</feature>
<feature type="helix" evidence="19">
    <location>
        <begin position="965"/>
        <end position="968"/>
    </location>
</feature>
<feature type="helix" evidence="16">
    <location>
        <begin position="970"/>
        <end position="987"/>
    </location>
</feature>
<feature type="turn" evidence="16">
    <location>
        <begin position="990"/>
        <end position="996"/>
    </location>
</feature>
<feature type="helix" evidence="16">
    <location>
        <begin position="997"/>
        <end position="1005"/>
    </location>
</feature>
<feature type="turn" evidence="16">
    <location>
        <begin position="1010"/>
        <end position="1012"/>
    </location>
</feature>
<feature type="helix" evidence="16">
    <location>
        <begin position="1016"/>
        <end position="1021"/>
    </location>
</feature>
<feature type="strand" evidence="14">
    <location>
        <begin position="1023"/>
        <end position="1025"/>
    </location>
</feature>
<feature type="strand" evidence="15">
    <location>
        <begin position="1028"/>
        <end position="1030"/>
    </location>
</feature>
<feature type="turn" evidence="19">
    <location>
        <begin position="1033"/>
        <end position="1036"/>
    </location>
</feature>
<feature type="helix" evidence="16">
    <location>
        <begin position="1040"/>
        <end position="1054"/>
    </location>
</feature>
<feature type="strand" evidence="19">
    <location>
        <begin position="1073"/>
        <end position="1077"/>
    </location>
</feature>
<feature type="strand" evidence="19">
    <location>
        <begin position="1092"/>
        <end position="1099"/>
    </location>
</feature>
<feature type="strand" evidence="19">
    <location>
        <begin position="1102"/>
        <end position="1106"/>
    </location>
</feature>
<feature type="strand" evidence="20">
    <location>
        <begin position="1108"/>
        <end position="1110"/>
    </location>
</feature>
<feature type="strand" evidence="19">
    <location>
        <begin position="1112"/>
        <end position="1116"/>
    </location>
</feature>
<feature type="helix" evidence="19">
    <location>
        <begin position="1117"/>
        <end position="1119"/>
    </location>
</feature>
<feature type="strand" evidence="19">
    <location>
        <begin position="1120"/>
        <end position="1122"/>
    </location>
</feature>
<dbReference type="EC" id="2.7.7.49"/>
<dbReference type="EC" id="2.7.7.7"/>
<dbReference type="EC" id="3.1.26.4"/>
<dbReference type="EC" id="3.4.23.-"/>
<dbReference type="EC" id="2.7.7.-" evidence="11"/>
<dbReference type="EC" id="3.1.-.-" evidence="11"/>
<dbReference type="EMBL" id="U21247">
    <property type="protein sequence ID" value="AAB48112.1"/>
    <property type="molecule type" value="Genomic_RNA"/>
</dbReference>
<dbReference type="EMBL" id="Y07723">
    <property type="protein sequence ID" value="CAA68997.1"/>
    <property type="molecule type" value="Genomic_DNA"/>
</dbReference>
<dbReference type="EMBL" id="Y07724">
    <property type="protein sequence ID" value="CAA68999.1"/>
    <property type="molecule type" value="Genomic_DNA"/>
</dbReference>
<dbReference type="EMBL" id="Y07725">
    <property type="protein sequence ID" value="CAA69003.1"/>
    <property type="molecule type" value="Genomic_DNA"/>
</dbReference>
<dbReference type="EMBL" id="M19427">
    <property type="protein sequence ID" value="AAA66556.1"/>
    <property type="status" value="ALT_INIT"/>
    <property type="molecule type" value="Genomic_RNA"/>
</dbReference>
<dbReference type="EMBL" id="M54978">
    <property type="protein sequence ID" value="AAA46122.1"/>
    <property type="status" value="ALT_FRAME"/>
    <property type="molecule type" value="Genomic_RNA"/>
</dbReference>
<dbReference type="PDB" id="2LSN">
    <property type="method" value="NMR"/>
    <property type="chains" value="A=591-751"/>
</dbReference>
<dbReference type="PDB" id="2X6N">
    <property type="method" value="X-ray"/>
    <property type="resolution" value="2.06 A"/>
    <property type="chains" value="A/B/C/D/E/F=861-1060"/>
</dbReference>
<dbReference type="PDB" id="2X6S">
    <property type="method" value="X-ray"/>
    <property type="resolution" value="2.29 A"/>
    <property type="chains" value="A/B/C/D/E/F=861-1060"/>
</dbReference>
<dbReference type="PDB" id="2X74">
    <property type="method" value="X-ray"/>
    <property type="resolution" value="2.34 A"/>
    <property type="chains" value="A/B/C/D/E/F=861-1060"/>
</dbReference>
<dbReference type="PDB" id="2X78">
    <property type="method" value="X-ray"/>
    <property type="resolution" value="2.00 A"/>
    <property type="chains" value="A/B/C=861-1060"/>
</dbReference>
<dbReference type="PDB" id="3DLR">
    <property type="method" value="X-ray"/>
    <property type="resolution" value="2.20 A"/>
    <property type="chains" value="A=859-1058"/>
</dbReference>
<dbReference type="PDB" id="3L2Q">
    <property type="method" value="X-ray"/>
    <property type="resolution" value="3.25 A"/>
    <property type="chains" value="A/B=752-1143"/>
</dbReference>
<dbReference type="PDB" id="3L2R">
    <property type="method" value="X-ray"/>
    <property type="resolution" value="2.88 A"/>
    <property type="chains" value="A/B=752-1143"/>
</dbReference>
<dbReference type="PDB" id="3L2U">
    <property type="method" value="X-ray"/>
    <property type="resolution" value="3.15 A"/>
    <property type="chains" value="A/B=752-1143"/>
</dbReference>
<dbReference type="PDB" id="3L2V">
    <property type="method" value="X-ray"/>
    <property type="resolution" value="3.20 A"/>
    <property type="chains" value="A/B=752-1143"/>
</dbReference>
<dbReference type="PDB" id="3L2W">
    <property type="method" value="X-ray"/>
    <property type="resolution" value="3.20 A"/>
    <property type="chains" value="A/B=752-1143"/>
</dbReference>
<dbReference type="PDB" id="3OS0">
    <property type="method" value="X-ray"/>
    <property type="resolution" value="2.81 A"/>
    <property type="chains" value="A/B=752-1143"/>
</dbReference>
<dbReference type="PDB" id="3OS1">
    <property type="method" value="X-ray"/>
    <property type="resolution" value="2.97 A"/>
    <property type="chains" value="A/B=752-1143"/>
</dbReference>
<dbReference type="PDB" id="3OS2">
    <property type="method" value="X-ray"/>
    <property type="resolution" value="3.32 A"/>
    <property type="chains" value="A/B=752-1143"/>
</dbReference>
<dbReference type="PDB" id="3OY9">
    <property type="method" value="X-ray"/>
    <property type="resolution" value="2.95 A"/>
    <property type="chains" value="A/B=752-1143"/>
</dbReference>
<dbReference type="PDB" id="3OYA">
    <property type="method" value="X-ray"/>
    <property type="resolution" value="2.85 A"/>
    <property type="chains" value="A/B=752-1143"/>
</dbReference>
<dbReference type="PDB" id="3OYB">
    <property type="method" value="X-ray"/>
    <property type="resolution" value="2.54 A"/>
    <property type="chains" value="A/B=752-1143"/>
</dbReference>
<dbReference type="PDB" id="3OYC">
    <property type="method" value="X-ray"/>
    <property type="resolution" value="2.66 A"/>
    <property type="chains" value="A/B=752-1143"/>
</dbReference>
<dbReference type="PDB" id="3OYD">
    <property type="method" value="X-ray"/>
    <property type="resolution" value="2.54 A"/>
    <property type="chains" value="A/B=752-1143"/>
</dbReference>
<dbReference type="PDB" id="3OYE">
    <property type="method" value="X-ray"/>
    <property type="resolution" value="2.74 A"/>
    <property type="chains" value="A/B=752-1143"/>
</dbReference>
<dbReference type="PDB" id="3OYF">
    <property type="method" value="X-ray"/>
    <property type="resolution" value="2.51 A"/>
    <property type="chains" value="A/B=752-1143"/>
</dbReference>
<dbReference type="PDB" id="3OYG">
    <property type="method" value="X-ray"/>
    <property type="resolution" value="2.56 A"/>
    <property type="chains" value="A/B=752-1143"/>
</dbReference>
<dbReference type="PDB" id="3OYH">
    <property type="method" value="X-ray"/>
    <property type="resolution" value="2.74 A"/>
    <property type="chains" value="A/B=752-1143"/>
</dbReference>
<dbReference type="PDB" id="3OYI">
    <property type="method" value="X-ray"/>
    <property type="resolution" value="2.72 A"/>
    <property type="chains" value="A/B=752-1143"/>
</dbReference>
<dbReference type="PDB" id="3OYJ">
    <property type="method" value="X-ray"/>
    <property type="resolution" value="2.68 A"/>
    <property type="chains" value="A/B=752-1143"/>
</dbReference>
<dbReference type="PDB" id="3OYK">
    <property type="method" value="X-ray"/>
    <property type="resolution" value="2.72 A"/>
    <property type="chains" value="A/B=752-1143"/>
</dbReference>
<dbReference type="PDB" id="3OYL">
    <property type="method" value="X-ray"/>
    <property type="resolution" value="2.54 A"/>
    <property type="chains" value="A/B=752-1143"/>
</dbReference>
<dbReference type="PDB" id="3OYM">
    <property type="method" value="X-ray"/>
    <property type="resolution" value="2.02 A"/>
    <property type="chains" value="A/B=752-1143"/>
</dbReference>
<dbReference type="PDB" id="3OYN">
    <property type="method" value="X-ray"/>
    <property type="resolution" value="2.68 A"/>
    <property type="chains" value="A/B=752-1143"/>
</dbReference>
<dbReference type="PDB" id="3S3M">
    <property type="method" value="X-ray"/>
    <property type="resolution" value="2.49 A"/>
    <property type="chains" value="A/B=752-1143"/>
</dbReference>
<dbReference type="PDB" id="3S3N">
    <property type="method" value="X-ray"/>
    <property type="resolution" value="2.49 A"/>
    <property type="chains" value="A/B=752-1143"/>
</dbReference>
<dbReference type="PDB" id="3S3O">
    <property type="method" value="X-ray"/>
    <property type="resolution" value="2.55 A"/>
    <property type="chains" value="A/B=752-1143"/>
</dbReference>
<dbReference type="PDB" id="4BAC">
    <property type="method" value="X-ray"/>
    <property type="resolution" value="3.26 A"/>
    <property type="chains" value="A/B=752-1143"/>
</dbReference>
<dbReference type="PDB" id="4BDY">
    <property type="method" value="X-ray"/>
    <property type="resolution" value="2.52 A"/>
    <property type="chains" value="A/B=752-1143"/>
</dbReference>
<dbReference type="PDB" id="4BDZ">
    <property type="method" value="X-ray"/>
    <property type="resolution" value="2.85 A"/>
    <property type="chains" value="A/B=752-1143"/>
</dbReference>
<dbReference type="PDB" id="4BE0">
    <property type="method" value="X-ray"/>
    <property type="resolution" value="2.68 A"/>
    <property type="chains" value="A/B=752-1143"/>
</dbReference>
<dbReference type="PDB" id="4BE1">
    <property type="method" value="X-ray"/>
    <property type="resolution" value="2.71 A"/>
    <property type="chains" value="A/B=752-1143"/>
</dbReference>
<dbReference type="PDB" id="4BE2">
    <property type="method" value="X-ray"/>
    <property type="resolution" value="2.38 A"/>
    <property type="chains" value="A/B=752-1143"/>
</dbReference>
<dbReference type="PDB" id="4E7H">
    <property type="method" value="X-ray"/>
    <property type="resolution" value="2.57 A"/>
    <property type="chains" value="A/B=752-1143"/>
</dbReference>
<dbReference type="PDB" id="4E7I">
    <property type="method" value="X-ray"/>
    <property type="resolution" value="2.53 A"/>
    <property type="chains" value="A/B=752-1143"/>
</dbReference>
<dbReference type="PDB" id="4E7J">
    <property type="method" value="X-ray"/>
    <property type="resolution" value="3.15 A"/>
    <property type="chains" value="A/B=752-1143"/>
</dbReference>
<dbReference type="PDB" id="4E7K">
    <property type="method" value="X-ray"/>
    <property type="resolution" value="3.02 A"/>
    <property type="chains" value="A/B=752-1143"/>
</dbReference>
<dbReference type="PDB" id="4E7L">
    <property type="method" value="X-ray"/>
    <property type="resolution" value="3.00 A"/>
    <property type="chains" value="A/B=752-1143"/>
</dbReference>
<dbReference type="PDB" id="4IKF">
    <property type="method" value="X-ray"/>
    <property type="resolution" value="3.40 A"/>
    <property type="chains" value="A/B=752-1143"/>
</dbReference>
<dbReference type="PDB" id="4ZTF">
    <property type="method" value="X-ray"/>
    <property type="resolution" value="2.70 A"/>
    <property type="chains" value="A/B=752-1143"/>
</dbReference>
<dbReference type="PDB" id="4ZTJ">
    <property type="method" value="X-ray"/>
    <property type="resolution" value="2.67 A"/>
    <property type="chains" value="A/B=752-1143"/>
</dbReference>
<dbReference type="PDB" id="5FRM">
    <property type="method" value="X-ray"/>
    <property type="resolution" value="2.58 A"/>
    <property type="chains" value="A/B=752-1143"/>
</dbReference>
<dbReference type="PDB" id="5FRN">
    <property type="method" value="X-ray"/>
    <property type="resolution" value="2.85 A"/>
    <property type="chains" value="A/B=752-1143"/>
</dbReference>
<dbReference type="PDB" id="5FRO">
    <property type="method" value="X-ray"/>
    <property type="resolution" value="2.67 A"/>
    <property type="chains" value="A/B=752-1143"/>
</dbReference>
<dbReference type="PDB" id="5MMA">
    <property type="method" value="X-ray"/>
    <property type="resolution" value="2.55 A"/>
    <property type="chains" value="A/B=752-1143"/>
</dbReference>
<dbReference type="PDB" id="5MMB">
    <property type="method" value="X-ray"/>
    <property type="resolution" value="2.77 A"/>
    <property type="chains" value="A/B=753-1143"/>
</dbReference>
<dbReference type="PDB" id="5NO1">
    <property type="method" value="X-ray"/>
    <property type="resolution" value="2.60 A"/>
    <property type="chains" value="A/B=754-1143"/>
</dbReference>
<dbReference type="PDB" id="5UOP">
    <property type="method" value="X-ray"/>
    <property type="resolution" value="2.85 A"/>
    <property type="chains" value="A/B=752-1143"/>
</dbReference>
<dbReference type="PDB" id="5UOQ">
    <property type="method" value="X-ray"/>
    <property type="resolution" value="2.61 A"/>
    <property type="chains" value="A/B=752-1143"/>
</dbReference>
<dbReference type="PDB" id="6RNY">
    <property type="method" value="EM"/>
    <property type="resolution" value="3.90 A"/>
    <property type="chains" value="K/L/O/P=754-1143"/>
</dbReference>
<dbReference type="PDB" id="7ADU">
    <property type="method" value="X-ray"/>
    <property type="resolution" value="2.62 A"/>
    <property type="chains" value="A/B=754-1143"/>
</dbReference>
<dbReference type="PDB" id="7ADV">
    <property type="method" value="X-ray"/>
    <property type="resolution" value="2.65 A"/>
    <property type="chains" value="A/B=754-1143"/>
</dbReference>
<dbReference type="PDBsum" id="2LSN"/>
<dbReference type="PDBsum" id="2X6N"/>
<dbReference type="PDBsum" id="2X6S"/>
<dbReference type="PDBsum" id="2X74"/>
<dbReference type="PDBsum" id="2X78"/>
<dbReference type="PDBsum" id="3DLR"/>
<dbReference type="PDBsum" id="3L2Q"/>
<dbReference type="PDBsum" id="3L2R"/>
<dbReference type="PDBsum" id="3L2U"/>
<dbReference type="PDBsum" id="3L2V"/>
<dbReference type="PDBsum" id="3L2W"/>
<dbReference type="PDBsum" id="3OS0"/>
<dbReference type="PDBsum" id="3OS1"/>
<dbReference type="PDBsum" id="3OS2"/>
<dbReference type="PDBsum" id="3OY9"/>
<dbReference type="PDBsum" id="3OYA"/>
<dbReference type="PDBsum" id="3OYB"/>
<dbReference type="PDBsum" id="3OYC"/>
<dbReference type="PDBsum" id="3OYD"/>
<dbReference type="PDBsum" id="3OYE"/>
<dbReference type="PDBsum" id="3OYF"/>
<dbReference type="PDBsum" id="3OYG"/>
<dbReference type="PDBsum" id="3OYH"/>
<dbReference type="PDBsum" id="3OYI"/>
<dbReference type="PDBsum" id="3OYJ"/>
<dbReference type="PDBsum" id="3OYK"/>
<dbReference type="PDBsum" id="3OYL"/>
<dbReference type="PDBsum" id="3OYM"/>
<dbReference type="PDBsum" id="3OYN"/>
<dbReference type="PDBsum" id="3S3M"/>
<dbReference type="PDBsum" id="3S3N"/>
<dbReference type="PDBsum" id="3S3O"/>
<dbReference type="PDBsum" id="4BAC"/>
<dbReference type="PDBsum" id="4BDY"/>
<dbReference type="PDBsum" id="4BDZ"/>
<dbReference type="PDBsum" id="4BE0"/>
<dbReference type="PDBsum" id="4BE1"/>
<dbReference type="PDBsum" id="4BE2"/>
<dbReference type="PDBsum" id="4E7H"/>
<dbReference type="PDBsum" id="4E7I"/>
<dbReference type="PDBsum" id="4E7J"/>
<dbReference type="PDBsum" id="4E7K"/>
<dbReference type="PDBsum" id="4E7L"/>
<dbReference type="PDBsum" id="4IKF"/>
<dbReference type="PDBsum" id="4ZTF"/>
<dbReference type="PDBsum" id="4ZTJ"/>
<dbReference type="PDBsum" id="5FRM"/>
<dbReference type="PDBsum" id="5FRN"/>
<dbReference type="PDBsum" id="5FRO"/>
<dbReference type="PDBsum" id="5MMA"/>
<dbReference type="PDBsum" id="5MMB"/>
<dbReference type="PDBsum" id="5NO1"/>
<dbReference type="PDBsum" id="5UOP"/>
<dbReference type="PDBsum" id="5UOQ"/>
<dbReference type="PDBsum" id="6RNY"/>
<dbReference type="PDBsum" id="7ADU"/>
<dbReference type="PDBsum" id="7ADV"/>
<dbReference type="EMDB" id="EMD-2992"/>
<dbReference type="EMDB" id="EMD-4960"/>
<dbReference type="SMR" id="P14350"/>
<dbReference type="DIP" id="DIP-58582N"/>
<dbReference type="MEROPS" id="A09.001"/>
<dbReference type="BRENDA" id="3.1.13.2">
    <property type="organism ID" value="2705"/>
</dbReference>
<dbReference type="EvolutionaryTrace" id="P14350"/>
<dbReference type="Proteomes" id="UP000138352">
    <property type="component" value="Genome"/>
</dbReference>
<dbReference type="Proteomes" id="UP000165559">
    <property type="component" value="Segment"/>
</dbReference>
<dbReference type="GO" id="GO:0043657">
    <property type="term" value="C:host cell"/>
    <property type="evidence" value="ECO:0007669"/>
    <property type="project" value="GOC"/>
</dbReference>
<dbReference type="GO" id="GO:0030430">
    <property type="term" value="C:host cell cytoplasm"/>
    <property type="evidence" value="ECO:0007669"/>
    <property type="project" value="UniProtKB-SubCell"/>
</dbReference>
<dbReference type="GO" id="GO:0042025">
    <property type="term" value="C:host cell nucleus"/>
    <property type="evidence" value="ECO:0007669"/>
    <property type="project" value="UniProtKB-SubCell"/>
</dbReference>
<dbReference type="GO" id="GO:0044423">
    <property type="term" value="C:virion component"/>
    <property type="evidence" value="ECO:0007669"/>
    <property type="project" value="UniProtKB-KW"/>
</dbReference>
<dbReference type="GO" id="GO:0004190">
    <property type="term" value="F:aspartic-type endopeptidase activity"/>
    <property type="evidence" value="ECO:0007669"/>
    <property type="project" value="UniProtKB-KW"/>
</dbReference>
<dbReference type="GO" id="GO:0003887">
    <property type="term" value="F:DNA-directed DNA polymerase activity"/>
    <property type="evidence" value="ECO:0007669"/>
    <property type="project" value="UniProtKB-KW"/>
</dbReference>
<dbReference type="GO" id="GO:0046872">
    <property type="term" value="F:metal ion binding"/>
    <property type="evidence" value="ECO:0007669"/>
    <property type="project" value="UniProtKB-KW"/>
</dbReference>
<dbReference type="GO" id="GO:0003723">
    <property type="term" value="F:RNA binding"/>
    <property type="evidence" value="ECO:0007669"/>
    <property type="project" value="UniProtKB-KW"/>
</dbReference>
<dbReference type="GO" id="GO:0003964">
    <property type="term" value="F:RNA-directed DNA polymerase activity"/>
    <property type="evidence" value="ECO:0007669"/>
    <property type="project" value="UniProtKB-KW"/>
</dbReference>
<dbReference type="GO" id="GO:0004523">
    <property type="term" value="F:RNA-DNA hybrid ribonuclease activity"/>
    <property type="evidence" value="ECO:0007669"/>
    <property type="project" value="UniProtKB-EC"/>
</dbReference>
<dbReference type="GO" id="GO:0015074">
    <property type="term" value="P:DNA integration"/>
    <property type="evidence" value="ECO:0007669"/>
    <property type="project" value="UniProtKB-KW"/>
</dbReference>
<dbReference type="GO" id="GO:0006310">
    <property type="term" value="P:DNA recombination"/>
    <property type="evidence" value="ECO:0007669"/>
    <property type="project" value="UniProtKB-KW"/>
</dbReference>
<dbReference type="GO" id="GO:0075713">
    <property type="term" value="P:establishment of integrated proviral latency"/>
    <property type="evidence" value="ECO:0007669"/>
    <property type="project" value="UniProtKB-KW"/>
</dbReference>
<dbReference type="GO" id="GO:0006508">
    <property type="term" value="P:proteolysis"/>
    <property type="evidence" value="ECO:0007669"/>
    <property type="project" value="UniProtKB-KW"/>
</dbReference>
<dbReference type="GO" id="GO:0046718">
    <property type="term" value="P:symbiont entry into host cell"/>
    <property type="evidence" value="ECO:0007669"/>
    <property type="project" value="UniProtKB-KW"/>
</dbReference>
<dbReference type="GO" id="GO:0044826">
    <property type="term" value="P:viral genome integration into host DNA"/>
    <property type="evidence" value="ECO:0007669"/>
    <property type="project" value="UniProtKB-KW"/>
</dbReference>
<dbReference type="GO" id="GO:0075732">
    <property type="term" value="P:viral penetration into host nucleus"/>
    <property type="evidence" value="ECO:0007669"/>
    <property type="project" value="UniProtKB-KW"/>
</dbReference>
<dbReference type="FunFam" id="2.40.70.10:FF:000193">
    <property type="entry name" value="Pro-Pol polyprotein"/>
    <property type="match status" value="1"/>
</dbReference>
<dbReference type="FunFam" id="3.30.420.10:FF:000263">
    <property type="entry name" value="Pro-Pol polyprotein"/>
    <property type="match status" value="1"/>
</dbReference>
<dbReference type="FunFam" id="3.30.420.10:FF:000335">
    <property type="entry name" value="Pro-Pol polyprotein"/>
    <property type="match status" value="1"/>
</dbReference>
<dbReference type="Gene3D" id="1.10.340.70">
    <property type="match status" value="1"/>
</dbReference>
<dbReference type="Gene3D" id="2.30.30.140">
    <property type="match status" value="1"/>
</dbReference>
<dbReference type="Gene3D" id="3.30.70.270">
    <property type="match status" value="2"/>
</dbReference>
<dbReference type="Gene3D" id="6.10.20.110">
    <property type="match status" value="1"/>
</dbReference>
<dbReference type="Gene3D" id="2.40.70.10">
    <property type="entry name" value="Acid Proteases"/>
    <property type="match status" value="1"/>
</dbReference>
<dbReference type="Gene3D" id="3.10.10.10">
    <property type="entry name" value="HIV Type 1 Reverse Transcriptase, subunit A, domain 1"/>
    <property type="match status" value="1"/>
</dbReference>
<dbReference type="Gene3D" id="3.30.420.10">
    <property type="entry name" value="Ribonuclease H-like superfamily/Ribonuclease H"/>
    <property type="match status" value="2"/>
</dbReference>
<dbReference type="InterPro" id="IPR043502">
    <property type="entry name" value="DNA/RNA_pol_sf"/>
</dbReference>
<dbReference type="InterPro" id="IPR001584">
    <property type="entry name" value="Integrase_cat-core"/>
</dbReference>
<dbReference type="InterPro" id="IPR041588">
    <property type="entry name" value="Integrase_H2C2"/>
</dbReference>
<dbReference type="InterPro" id="IPR021109">
    <property type="entry name" value="Peptidase_aspartic_dom_sf"/>
</dbReference>
<dbReference type="InterPro" id="IPR050951">
    <property type="entry name" value="Retrovirus_Pol_polyprotein"/>
</dbReference>
<dbReference type="InterPro" id="IPR043128">
    <property type="entry name" value="Rev_trsase/Diguanyl_cyclase"/>
</dbReference>
<dbReference type="InterPro" id="IPR012337">
    <property type="entry name" value="RNaseH-like_sf"/>
</dbReference>
<dbReference type="InterPro" id="IPR002156">
    <property type="entry name" value="RNaseH_domain"/>
</dbReference>
<dbReference type="InterPro" id="IPR036397">
    <property type="entry name" value="RNaseH_sf"/>
</dbReference>
<dbReference type="InterPro" id="IPR000477">
    <property type="entry name" value="RT_dom"/>
</dbReference>
<dbReference type="InterPro" id="IPR041577">
    <property type="entry name" value="RT_RNaseH_2"/>
</dbReference>
<dbReference type="InterPro" id="IPR040903">
    <property type="entry name" value="SH3_11"/>
</dbReference>
<dbReference type="InterPro" id="IPR001641">
    <property type="entry name" value="Spumavirus_A9"/>
</dbReference>
<dbReference type="PANTHER" id="PTHR37984">
    <property type="entry name" value="PROTEIN CBG26694"/>
    <property type="match status" value="1"/>
</dbReference>
<dbReference type="PANTHER" id="PTHR37984:SF5">
    <property type="entry name" value="PROTEIN NYNRIN-LIKE"/>
    <property type="match status" value="1"/>
</dbReference>
<dbReference type="Pfam" id="PF17921">
    <property type="entry name" value="Integrase_H2C2"/>
    <property type="match status" value="1"/>
</dbReference>
<dbReference type="Pfam" id="PF00075">
    <property type="entry name" value="RNase_H"/>
    <property type="match status" value="1"/>
</dbReference>
<dbReference type="Pfam" id="PF17919">
    <property type="entry name" value="RT_RNaseH_2"/>
    <property type="match status" value="1"/>
</dbReference>
<dbReference type="Pfam" id="PF00665">
    <property type="entry name" value="rve"/>
    <property type="match status" value="1"/>
</dbReference>
<dbReference type="Pfam" id="PF00078">
    <property type="entry name" value="RVT_1"/>
    <property type="match status" value="1"/>
</dbReference>
<dbReference type="Pfam" id="PF18103">
    <property type="entry name" value="SH3_11"/>
    <property type="match status" value="1"/>
</dbReference>
<dbReference type="Pfam" id="PF03539">
    <property type="entry name" value="Spuma_A9PTase"/>
    <property type="match status" value="1"/>
</dbReference>
<dbReference type="PRINTS" id="PR00920">
    <property type="entry name" value="SPUMVIRPTASE"/>
</dbReference>
<dbReference type="SUPFAM" id="SSF56672">
    <property type="entry name" value="DNA/RNA polymerases"/>
    <property type="match status" value="1"/>
</dbReference>
<dbReference type="SUPFAM" id="SSF53098">
    <property type="entry name" value="Ribonuclease H-like"/>
    <property type="match status" value="2"/>
</dbReference>
<dbReference type="PROSITE" id="PS51531">
    <property type="entry name" value="FV_PR"/>
    <property type="match status" value="1"/>
</dbReference>
<dbReference type="PROSITE" id="PS50994">
    <property type="entry name" value="INTEGRASE"/>
    <property type="match status" value="1"/>
</dbReference>
<dbReference type="PROSITE" id="PS50879">
    <property type="entry name" value="RNASE_H_1"/>
    <property type="match status" value="1"/>
</dbReference>
<dbReference type="PROSITE" id="PS50878">
    <property type="entry name" value="RT_POL"/>
    <property type="match status" value="1"/>
</dbReference>
<proteinExistence type="evidence at protein level"/>
<reference key="1">
    <citation type="submission" date="1995-02" db="EMBL/GenBank/DDBJ databases">
        <authorList>
            <person name="Fluegel R.M."/>
        </authorList>
    </citation>
    <scope>NUCLEOTIDE SEQUENCE [GENOMIC RNA]</scope>
    <scope>SEQUENCE REVISION</scope>
</reference>
<reference key="2">
    <citation type="submission" date="1996-08" db="EMBL/GenBank/DDBJ databases">
        <title>Long terminal repeat U3-length polymorphism of human foamy virus.</title>
        <authorList>
            <person name="Schmidt M."/>
            <person name="Herchenrder O."/>
            <person name="Heeney J.L."/>
            <person name="Rethwilm A."/>
        </authorList>
    </citation>
    <scope>NUCLEOTIDE SEQUENCE [GENOMIC DNA]</scope>
</reference>
<reference key="3">
    <citation type="journal article" date="1988" name="J. Virol.">
        <title>Analysis of the primary structure of the long terminal repeat and the gag and pol genes of the human spumaretrovirus.</title>
        <authorList>
            <person name="Maurer B."/>
            <person name="Bannert H."/>
            <person name="Darai G."/>
            <person name="Fluegel R.M."/>
        </authorList>
    </citation>
    <scope>NUCLEOTIDE SEQUENCE [GENOMIC RNA] OF 1-742</scope>
</reference>
<reference key="4">
    <citation type="journal article" date="1987" name="EMBO J.">
        <title>Nucleotide sequence analysis of the env gene and its flanking regions of the human spumaretrovirus reveals two novel genes.</title>
        <authorList>
            <person name="Fluegel R.M."/>
            <person name="Rethwilm A."/>
            <person name="Maurer B."/>
            <person name="Darai G."/>
        </authorList>
    </citation>
    <scope>NUCLEOTIDE SEQUENCE [GENOMIC RNA] OF 741-886</scope>
</reference>
<reference key="5">
    <citation type="journal article" date="1995" name="J. Virol.">
        <title>Active foamy virus proteinase is essential for virus infectivity but not for formation of a Pol polyprotein.</title>
        <authorList>
            <person name="Konvalinka J."/>
            <person name="Loechelt M."/>
            <person name="Zentgraf H."/>
            <person name="Fluegel R.M."/>
            <person name="Kraeusslich H.-G."/>
        </authorList>
    </citation>
    <scope>ACTIVE SITE OF PROTEASE</scope>
    <scope>MUTAGENESIS OF ASP-24 AND SER-25</scope>
</reference>
<reference key="6">
    <citation type="journal article" date="1995" name="Nucleic Acids Res.">
        <title>Mutational analysis of the reverse transcriptase and ribonuclease H domains of the human foamy virus.</title>
        <authorList>
            <person name="Kogel D."/>
            <person name="Aboud M."/>
            <person name="Fluegel R.M."/>
        </authorList>
    </citation>
    <scope>MUTAGENESIS OF PRO-152; PRO-169; PRO-193; ASP-599 AND TYR-672</scope>
</reference>
<reference key="7">
    <citation type="journal article" date="1996" name="J. Virol.">
        <title>The human foamy virus pol gene is expressed as a Pro-Pol polyprotein and not as a Gag-Pol fusion protein.</title>
        <authorList>
            <person name="Loechelt M."/>
            <person name="Fluegel R.M."/>
        </authorList>
    </citation>
    <scope>CHARACTERIZATION OF POLYPROTEIN</scope>
</reference>
<reference key="8">
    <citation type="journal article" date="1998" name="J. Virol.">
        <title>Molecular characterization of proteolytic processing of the Pol proteins of human foamy virus reveals novel features of the viral protease.</title>
        <authorList>
            <person name="Pfrepper K.-I."/>
            <person name="Rackwitz H.R."/>
            <person name="Schnoelzer M."/>
            <person name="Heid H."/>
            <person name="Loechelt M."/>
            <person name="Fluegel R.M."/>
        </authorList>
    </citation>
    <scope>PROTEOLYTIC PROCESSING OF POLYPROTEIN</scope>
</reference>
<reference key="9">
    <citation type="journal article" date="2000" name="J. Gen. Virol.">
        <title>Primate foamy virus Pol proteins are imported into the nucleus.</title>
        <authorList>
            <person name="Imrich H."/>
            <person name="Heinkelein M."/>
            <person name="Herchenroder O."/>
            <person name="Rethwilm A."/>
        </authorList>
    </citation>
    <scope>SUBCELLULAR LOCATION</scope>
    <source>
        <strain>Isolate HSRV2</strain>
    </source>
</reference>
<reference key="10">
    <citation type="journal article" date="2003" name="J. Virol.">
        <title>Biphasic DNA synthesis in spumaviruses.</title>
        <authorList>
            <person name="Delelis O."/>
            <person name="Saib A."/>
            <person name="Sonigo P."/>
        </authorList>
    </citation>
    <scope>CHARACTERIZATION OF REVERSE TRANSCRIPTASE</scope>
</reference>
<reference key="11">
    <citation type="journal article" date="2004" name="J. Virol.">
        <title>Foamy virus integration.</title>
        <authorList>
            <person name="Juretzek T."/>
            <person name="Holm T."/>
            <person name="Gartner K."/>
            <person name="Kanzler S."/>
            <person name="Lindemann D."/>
            <person name="Herchenroder O."/>
            <person name="Picard-Maureau M."/>
            <person name="Rammling M."/>
            <person name="Heinkelein M."/>
            <person name="Rethwilm A."/>
        </authorList>
    </citation>
    <scope>CHARACTERIZATION OF INTEGRASE</scope>
</reference>
<reference key="12">
    <citation type="journal article" date="2003" name="Curr. Top. Microbiol. Immunol.">
        <title>Proteolytic processing of foamy virus Gag and Pol proteins.</title>
        <authorList>
            <person name="Fluegel R.M."/>
            <person name="Pfrepper K.-I."/>
        </authorList>
    </citation>
    <scope>REVIEW</scope>
</reference>
<reference key="13">
    <citation type="journal article" date="2004" name="Curr. Opin. Microbiol.">
        <title>Foamy viruses-a world apart.</title>
        <authorList>
            <person name="Delelis O."/>
            <person name="Lehmann-Che J."/>
            <person name="Saib A."/>
        </authorList>
    </citation>
    <scope>REVIEW</scope>
</reference>
<reference key="14">
    <citation type="journal article" date="2013" name="Viruses">
        <title>Structural and functional insights into foamy viral integrase.</title>
        <authorList>
            <person name="Hossain M.A."/>
            <person name="Ali M.K."/>
            <person name="Shin C.G."/>
        </authorList>
    </citation>
    <scope>REVIEW (INTEGRASE)</scope>
</reference>
<protein>
    <recommendedName>
        <fullName>Pro-Pol polyprotein</fullName>
    </recommendedName>
    <alternativeName>
        <fullName>Pr125Pol</fullName>
    </alternativeName>
    <component>
        <recommendedName>
            <fullName>Protease/Reverse transcriptase/ribonuclease H</fullName>
            <ecNumber>2.7.7.49</ecNumber>
            <ecNumber>2.7.7.7</ecNumber>
            <ecNumber>3.1.26.4</ecNumber>
            <ecNumber>3.4.23.-</ecNumber>
        </recommendedName>
        <alternativeName>
            <fullName>p87Pro-RT-RNaseH</fullName>
        </alternativeName>
    </component>
    <component>
        <recommendedName>
            <fullName>Protease/Reverse transcriptase</fullName>
            <ecNumber>2.7.7.49</ecNumber>
            <ecNumber>2.7.7.7</ecNumber>
            <ecNumber>3.4.23.-</ecNumber>
        </recommendedName>
        <alternativeName>
            <fullName>p65Pro-RT</fullName>
        </alternativeName>
    </component>
    <component>
        <recommendedName>
            <fullName>Ribonuclease H</fullName>
            <shortName>RNase H</shortName>
            <ecNumber>3.1.26.4</ecNumber>
        </recommendedName>
    </component>
    <component>
        <recommendedName>
            <fullName>Integrase</fullName>
            <shortName>IN</shortName>
            <ecNumber evidence="11">2.7.7.-</ecNumber>
            <ecNumber evidence="11">3.1.-.-</ecNumber>
        </recommendedName>
        <alternativeName>
            <fullName>p42In</fullName>
        </alternativeName>
    </component>
</protein>
<name>POL_FOAMV</name>
<gene>
    <name type="primary">pol</name>
</gene>
<organismHost>
    <name type="scientific">Homo sapiens</name>
    <name type="common">Human</name>
    <dbReference type="NCBI Taxonomy" id="9606"/>
</organismHost>
<comment type="function">
    <text evidence="1">The aspartyl protease activity mediates proteolytic cleavages of Gag and Pol polyproteins. The reverse transcriptase (RT) activity converts the viral RNA genome into dsDNA in the cytoplasm, shortly after virus entry into the cell (early reverse transcription) or after proviral DNA transcription (late reverse transcription). RT consists of a DNA polymerase activity that can copy either DNA or RNA templates, and a ribonuclease H (RNase H) activity that cleaves the RNA strand of RNA-DNA heteroduplexes in a partially processive 3' to 5' endonucleasic mode. Conversion of viral genomic RNA into dsDNA requires many steps. A tRNA-Lys1,2 binds to the primer-binding site (PBS) situated at the 5'-end of the viral RNA. RT uses the 3' end of the tRNA primer to perform a short round of RNA-dependent minus-strand DNA synthesis. The reading proceeds through the U5 region and ends after the repeated (R) region which is present at both ends of viral RNA. The portion of the RNA-DNA heteroduplex is digested by the RNase H, resulting in a ssDNA product attached to the tRNA primer. This ssDNA/tRNA hybridizes with the identical R region situated at the 3' end of viral RNA. This template exchange, known as minus-strand DNA strong stop transfer, can be either intra- or intermolecular. RT uses the 3' end of this newly synthesized short ssDNA to perform the RNA-dependent minus-strand DNA synthesis of the whole template. RNase H digests the RNA template except for a polypurine tract (PPT) situated at the 5'-end and near the center of the genome. It is not clear if both polymerase and RNase H activities are simultaneous. RNase H probably can proceed both in a polymerase-dependent (RNA cut into small fragments by the same RT performing DNA synthesis) and a polymerase-independent mode (cleavage of remaining RNA fragments by free RTs). Secondly, RT performs DNA-directed plus-strand DNA synthesis using the PPT that has not been removed by RNase H as primer. PPT and tRNA primers are then removed by RNase H. The 3' and 5' ssDNA PBS regions hybridize to form a circular dsDNA intermediate. Strand displacement synthesis by RT to the PBS and PPT ends produces a blunt ended, linear dsDNA copy of the viral genome that includes long terminal repeats (LTRs) at both ends (By similarity).</text>
</comment>
<comment type="function">
    <text evidence="1">Integrase catalyzes viral DNA integration into the host chromosome, by performing a series of DNA cutting and joining reactions. This enzyme activity takes place after virion entry into a cell and reverse transcription of the RNA genome in dsDNA. The first step in the integration process is 3' processing. This step requires a complex comprising at least the viral genome, matrix protein, and integrase. This complex is called the pre-integration complex (PIC). The integrase protein removes 2 nucleotides from the 3' end of the viral DNA right (U5) end, leaving the left (U3) intact. In the second step, the PIC enters cell nucleus. This process is mediated through the integrase and allows the virus to infect both dividing (nuclear membrane disassembled) and G1/S-arrested cells (active translocation), but with no viral gene expression in the latter. In the third step, termed strand transfer, the integrase protein joins the previously processed 3' ends to the 5' ends of strands of target cellular DNA at the site of integration. It is however not clear how integration then proceeds to resolve the asymmetrical cleavage of viral DNA (By similarity).</text>
</comment>
<comment type="catalytic activity">
    <reaction evidence="3">
        <text>Endonucleolytic cleavage to 5'-phosphomonoester.</text>
        <dbReference type="EC" id="3.1.26.4"/>
    </reaction>
</comment>
<comment type="catalytic activity">
    <reaction evidence="2">
        <text>DNA(n) + a 2'-deoxyribonucleoside 5'-triphosphate = DNA(n+1) + diphosphate</text>
        <dbReference type="Rhea" id="RHEA:22508"/>
        <dbReference type="Rhea" id="RHEA-COMP:17339"/>
        <dbReference type="Rhea" id="RHEA-COMP:17340"/>
        <dbReference type="ChEBI" id="CHEBI:33019"/>
        <dbReference type="ChEBI" id="CHEBI:61560"/>
        <dbReference type="ChEBI" id="CHEBI:173112"/>
        <dbReference type="EC" id="2.7.7.49"/>
    </reaction>
</comment>
<comment type="catalytic activity">
    <reaction evidence="2">
        <text>DNA(n) + a 2'-deoxyribonucleoside 5'-triphosphate = DNA(n+1) + diphosphate</text>
        <dbReference type="Rhea" id="RHEA:22508"/>
        <dbReference type="Rhea" id="RHEA-COMP:17339"/>
        <dbReference type="Rhea" id="RHEA-COMP:17340"/>
        <dbReference type="ChEBI" id="CHEBI:33019"/>
        <dbReference type="ChEBI" id="CHEBI:61560"/>
        <dbReference type="ChEBI" id="CHEBI:173112"/>
        <dbReference type="EC" id="2.7.7.7"/>
    </reaction>
</comment>
<comment type="cofactor">
    <cofactor evidence="1">
        <name>Mg(2+)</name>
        <dbReference type="ChEBI" id="CHEBI:18420"/>
    </cofactor>
    <text evidence="1">Binds 2 magnesium ions for reverse transcriptase polymerase activity.</text>
</comment>
<comment type="cofactor">
    <cofactor evidence="1">
        <name>Mg(2+)</name>
        <dbReference type="ChEBI" id="CHEBI:18420"/>
    </cofactor>
    <text evidence="1">Binds 2 magnesium ions for ribonuclease H (RNase H) activity. Substrate-binding is a precondition for magnesium binding.</text>
</comment>
<comment type="cofactor">
    <cofactor evidence="1">
        <name>Mg(2+)</name>
        <dbReference type="ChEBI" id="CHEBI:18420"/>
    </cofactor>
    <text evidence="1">Magnesium ions are required for integrase activity. Binds at least 1, maybe 2 magnesium ions.</text>
</comment>
<comment type="subunit">
    <text evidence="5">The protease is a homodimer, whose active site consists of two apposed aspartic acid residues.</text>
</comment>
<comment type="interaction">
    <interactant intactId="EBI-16013918">
        <id>PRO_0000245446</id>
    </interactant>
    <interactant intactId="EBI-16013918">
        <id>PRO_0000245446</id>
        <label>pol</label>
        <dbReference type="UniProtKB" id="P14350"/>
    </interactant>
    <organismsDiffer>false</organismsDiffer>
    <experiments>6</experiments>
</comment>
<comment type="subcellular location">
    <molecule>Integrase</molecule>
    <subcellularLocation>
        <location evidence="10">Virion</location>
    </subcellularLocation>
    <subcellularLocation>
        <location>Host nucleus</location>
    </subcellularLocation>
    <subcellularLocation>
        <location evidence="10">Host cytoplasm</location>
    </subcellularLocation>
    <text evidence="10">Nuclear at initial phase, cytoplasmic at assembly.</text>
</comment>
<comment type="subcellular location">
    <molecule>Protease/Reverse transcriptase/ribonuclease H</molecule>
    <subcellularLocation>
        <location evidence="1">Host nucleus</location>
    </subcellularLocation>
    <subcellularLocation>
        <location evidence="10">Host cytoplasm</location>
    </subcellularLocation>
    <text evidence="10">Nuclear at initial phase, cytoplasmic at assembly.</text>
</comment>
<comment type="domain">
    <text evidence="1">The reverse transcriptase/ribonuclease H (RT) is structured in five subdomains: finger, palm, thumb, connection and RNase H. Within the palm subdomain, the 'primer grip' region is thought to be involved in the positioning of the primer terminus for accommodating the incoming nucleotide. The RNase H domain stabilizes the association of RT with primer-template (By similarity).</text>
</comment>
<comment type="domain">
    <text evidence="1">Integrase core domain contains the D-x(n)-D-x(35)-E motif, named for the phylogenetically conserved glutamic acid and aspartic acid residues and the invariant 35 amino acid spacing between the second and third acidic residues. Each acidic residue of the D,D(35)E motif is independently essential for the 3'-processing and strand transfer activities of purified integrase protein (By similarity).</text>
</comment>
<comment type="PTM">
    <text evidence="9">Specific enzymatic cleavages in vivo by viral protease yield mature proteins. The protease is not cleaved off from Pol. Since cleavage efficiency is not optimal for all sites, long and active p65Pro-RT, p87Pro-RT-RNaseH and even some Pr125Pol are detected in infected cells.</text>
</comment>
<comment type="miscellaneous">
    <text>The reverse transcriptase is an error-prone enzyme that lacks a proof-reading function. High mutations rate is a direct consequence of this characteristic. RT also displays frequent template switching leading to high recombination rate. Recombination mostly occurs between homologous regions of the two copackaged RNA genomes. If these two RNA molecules derive from different viral strains, reverse transcription will give rise to highly recombinated proviral DNAs.</text>
</comment>
<comment type="miscellaneous">
    <text>Foamy viruses are distinct from other retroviruses in many respects. Their protease is active as an uncleaved Pro-Pol protein. Mature particles do not include the usual processed retroviral structural protein (MA, CA and NC), but instead contain two large Gag proteins. Their functional nucleic acid appears to be either RNA or dsDNA (up to 20% of extracellular particles), because they probably proceed either to an early (before integration) or late reverse transcription (after assembly). Foamy viruses have the ability to retrotranspose intracellularly with high efficiency. They bud predominantly into the endoplasmic reticulum (ER) and occasionally at the plasma membrane. Budding requires the presence of Env proteins. Most viral particles probably remain within the infected cell.</text>
</comment>
<comment type="sequence caution" evidence="10">
    <conflict type="frameshift">
        <sequence resource="EMBL-CDS" id="AAA46122"/>
    </conflict>
</comment>
<comment type="sequence caution" evidence="10">
    <conflict type="erroneous initiation">
        <sequence resource="EMBL-CDS" id="AAA66556"/>
    </conflict>
</comment>
<keyword id="KW-0002">3D-structure</keyword>
<keyword id="KW-0064">Aspartyl protease</keyword>
<keyword id="KW-0229">DNA integration</keyword>
<keyword id="KW-0233">DNA recombination</keyword>
<keyword id="KW-0239">DNA-directed DNA polymerase</keyword>
<keyword id="KW-0255">Endonuclease</keyword>
<keyword id="KW-1035">Host cytoplasm</keyword>
<keyword id="KW-1048">Host nucleus</keyword>
<keyword id="KW-0378">Hydrolase</keyword>
<keyword id="KW-0460">Magnesium</keyword>
<keyword id="KW-0479">Metal-binding</keyword>
<keyword id="KW-0511">Multifunctional enzyme</keyword>
<keyword id="KW-0540">Nuclease</keyword>
<keyword id="KW-0548">Nucleotidyltransferase</keyword>
<keyword id="KW-0645">Protease</keyword>
<keyword id="KW-1185">Reference proteome</keyword>
<keyword id="KW-0694">RNA-binding</keyword>
<keyword id="KW-0695">RNA-directed DNA polymerase</keyword>
<keyword id="KW-0808">Transferase</keyword>
<keyword id="KW-1179">Viral genome integration</keyword>
<keyword id="KW-1163">Viral penetration into host nucleus</keyword>
<keyword id="KW-0946">Virion</keyword>
<keyword id="KW-1160">Virus entry into host cell</keyword>